<evidence type="ECO:0000250" key="1"/>
<evidence type="ECO:0000255" key="2"/>
<evidence type="ECO:0000255" key="3">
    <source>
        <dbReference type="PROSITE-ProRule" id="PRU10059"/>
    </source>
</evidence>
<evidence type="ECO:0000255" key="4">
    <source>
        <dbReference type="PROSITE-ProRule" id="PRU10140"/>
    </source>
</evidence>
<evidence type="ECO:0000305" key="5"/>
<gene>
    <name type="ordered locus">At2g44570</name>
    <name type="ORF">F16B22.6</name>
</gene>
<feature type="signal peptide" evidence="2">
    <location>
        <begin position="1"/>
        <end position="30"/>
    </location>
</feature>
<feature type="chain" id="PRO_0000249267" description="Endoglucanase 15">
    <location>
        <begin position="31"/>
        <end position="492"/>
    </location>
</feature>
<feature type="active site" description="Nucleophile" evidence="4">
    <location>
        <position position="86"/>
    </location>
</feature>
<feature type="active site" evidence="3">
    <location>
        <position position="414"/>
    </location>
</feature>
<feature type="active site" evidence="3">
    <location>
        <position position="466"/>
    </location>
</feature>
<feature type="active site" evidence="3">
    <location>
        <position position="475"/>
    </location>
</feature>
<name>GUN15_ARATH</name>
<sequence length="492" mass="53591">MSCISSQCFITIKSICIVLLLSITCGAVSANSNYGEALTKSLLYFEAQRSGKLPLDQRVIWRGDSALRDGSDAHVDLTGGYYDAGDNMKFGFPLAFTTTMLAWSSVEMESQLKAHQEHGNTLAALRWATDYLIKAHPEPNVLYGQVGDANLDHACWMRPEDMTTPRPSYRIDPQHPGADLAGETAAAMAAASLAFAPSDSAYAKTLISHAKELFEFAKDYPGVYHNSIPNAGGFYPSSGYEDELLWAAAWLHRATGDQTYLDHLTQASNSGGARSVFAWDDKFLGAQVLVAKLVFEGKVKNEGKMIEYKSMAEQFICNCAQKGFNNVKKTPGGLLWFLPWDNLQYTATASFALATYAKYLEAAQTSIQCPNGDVLQASDLLNLARAQVDYILGSNPKKMSYMVGYGTNYPKRPHHRGASIVSIKNDPKPVTCNGGFEAWYNNPKPNPNLLVGAIVGGPDEYDAYGDERSDFQHGEPDTVTVAPLLGVLAAIA</sequence>
<comment type="catalytic activity">
    <reaction>
        <text>Endohydrolysis of (1-&gt;4)-beta-D-glucosidic linkages in cellulose, lichenin and cereal beta-D-glucans.</text>
        <dbReference type="EC" id="3.2.1.4"/>
    </reaction>
</comment>
<comment type="subcellular location">
    <subcellularLocation>
        <location evidence="1">Secreted</location>
    </subcellularLocation>
</comment>
<comment type="similarity">
    <text evidence="4 5">Belongs to the glycosyl hydrolase 9 (cellulase E) family.</text>
</comment>
<proteinExistence type="inferred from homology"/>
<reference key="1">
    <citation type="journal article" date="1999" name="Nature">
        <title>Sequence and analysis of chromosome 2 of the plant Arabidopsis thaliana.</title>
        <authorList>
            <person name="Lin X."/>
            <person name="Kaul S."/>
            <person name="Rounsley S.D."/>
            <person name="Shea T.P."/>
            <person name="Benito M.-I."/>
            <person name="Town C.D."/>
            <person name="Fujii C.Y."/>
            <person name="Mason T.M."/>
            <person name="Bowman C.L."/>
            <person name="Barnstead M.E."/>
            <person name="Feldblyum T.V."/>
            <person name="Buell C.R."/>
            <person name="Ketchum K.A."/>
            <person name="Lee J.J."/>
            <person name="Ronning C.M."/>
            <person name="Koo H.L."/>
            <person name="Moffat K.S."/>
            <person name="Cronin L.A."/>
            <person name="Shen M."/>
            <person name="Pai G."/>
            <person name="Van Aken S."/>
            <person name="Umayam L."/>
            <person name="Tallon L.J."/>
            <person name="Gill J.E."/>
            <person name="Adams M.D."/>
            <person name="Carrera A.J."/>
            <person name="Creasy T.H."/>
            <person name="Goodman H.M."/>
            <person name="Somerville C.R."/>
            <person name="Copenhaver G.P."/>
            <person name="Preuss D."/>
            <person name="Nierman W.C."/>
            <person name="White O."/>
            <person name="Eisen J.A."/>
            <person name="Salzberg S.L."/>
            <person name="Fraser C.M."/>
            <person name="Venter J.C."/>
        </authorList>
    </citation>
    <scope>NUCLEOTIDE SEQUENCE [LARGE SCALE GENOMIC DNA]</scope>
    <source>
        <strain>cv. Columbia</strain>
    </source>
</reference>
<reference key="2">
    <citation type="journal article" date="2017" name="Plant J.">
        <title>Araport11: a complete reannotation of the Arabidopsis thaliana reference genome.</title>
        <authorList>
            <person name="Cheng C.Y."/>
            <person name="Krishnakumar V."/>
            <person name="Chan A.P."/>
            <person name="Thibaud-Nissen F."/>
            <person name="Schobel S."/>
            <person name="Town C.D."/>
        </authorList>
    </citation>
    <scope>GENOME REANNOTATION</scope>
    <source>
        <strain>cv. Columbia</strain>
    </source>
</reference>
<reference key="3">
    <citation type="journal article" date="2004" name="J. Mol. Evol.">
        <title>Phylogenetic analysis of the plant endo-beta-1,4-glucanase gene family.</title>
        <authorList>
            <person name="Libertini E."/>
            <person name="Li Y."/>
            <person name="McQueen-Mason S.J."/>
        </authorList>
    </citation>
    <scope>GENE FAMILY</scope>
</reference>
<organism>
    <name type="scientific">Arabidopsis thaliana</name>
    <name type="common">Mouse-ear cress</name>
    <dbReference type="NCBI Taxonomy" id="3702"/>
    <lineage>
        <taxon>Eukaryota</taxon>
        <taxon>Viridiplantae</taxon>
        <taxon>Streptophyta</taxon>
        <taxon>Embryophyta</taxon>
        <taxon>Tracheophyta</taxon>
        <taxon>Spermatophyta</taxon>
        <taxon>Magnoliopsida</taxon>
        <taxon>eudicotyledons</taxon>
        <taxon>Gunneridae</taxon>
        <taxon>Pentapetalae</taxon>
        <taxon>rosids</taxon>
        <taxon>malvids</taxon>
        <taxon>Brassicales</taxon>
        <taxon>Brassicaceae</taxon>
        <taxon>Camelineae</taxon>
        <taxon>Arabidopsis</taxon>
    </lineage>
</organism>
<keyword id="KW-0119">Carbohydrate metabolism</keyword>
<keyword id="KW-0961">Cell wall biogenesis/degradation</keyword>
<keyword id="KW-0136">Cellulose degradation</keyword>
<keyword id="KW-0326">Glycosidase</keyword>
<keyword id="KW-0378">Hydrolase</keyword>
<keyword id="KW-0624">Polysaccharide degradation</keyword>
<keyword id="KW-1185">Reference proteome</keyword>
<keyword id="KW-0964">Secreted</keyword>
<keyword id="KW-0732">Signal</keyword>
<dbReference type="EC" id="3.2.1.4"/>
<dbReference type="EMBL" id="AC003672">
    <property type="protein sequence ID" value="AAC27459.1"/>
    <property type="molecule type" value="Genomic_DNA"/>
</dbReference>
<dbReference type="EMBL" id="CP002685">
    <property type="protein sequence ID" value="AEC10439.1"/>
    <property type="molecule type" value="Genomic_DNA"/>
</dbReference>
<dbReference type="PIR" id="T01584">
    <property type="entry name" value="T01584"/>
</dbReference>
<dbReference type="RefSeq" id="NP_181985.1">
    <property type="nucleotide sequence ID" value="NM_130021.3"/>
</dbReference>
<dbReference type="SMR" id="O80497"/>
<dbReference type="FunCoup" id="O80497">
    <property type="interactions" value="170"/>
</dbReference>
<dbReference type="STRING" id="3702.O80497"/>
<dbReference type="CAZy" id="GH9">
    <property type="family name" value="Glycoside Hydrolase Family 9"/>
</dbReference>
<dbReference type="PaxDb" id="3702-AT2G44570.1"/>
<dbReference type="ProteomicsDB" id="247145"/>
<dbReference type="EnsemblPlants" id="AT2G44570.1">
    <property type="protein sequence ID" value="AT2G44570.1"/>
    <property type="gene ID" value="AT2G44570"/>
</dbReference>
<dbReference type="GeneID" id="819065"/>
<dbReference type="Gramene" id="AT2G44570.1">
    <property type="protein sequence ID" value="AT2G44570.1"/>
    <property type="gene ID" value="AT2G44570"/>
</dbReference>
<dbReference type="KEGG" id="ath:AT2G44570"/>
<dbReference type="Araport" id="AT2G44570"/>
<dbReference type="TAIR" id="AT2G44570">
    <property type="gene designation" value="GH9B12"/>
</dbReference>
<dbReference type="eggNOG" id="ENOG502QRF6">
    <property type="taxonomic scope" value="Eukaryota"/>
</dbReference>
<dbReference type="HOGENOM" id="CLU_008926_1_0_1"/>
<dbReference type="InParanoid" id="O80497"/>
<dbReference type="OMA" id="YVVNATH"/>
<dbReference type="PhylomeDB" id="O80497"/>
<dbReference type="BioCyc" id="ARA:AT2G44570-MONOMER"/>
<dbReference type="PRO" id="PR:O80497"/>
<dbReference type="Proteomes" id="UP000006548">
    <property type="component" value="Chromosome 2"/>
</dbReference>
<dbReference type="ExpressionAtlas" id="O80497">
    <property type="expression patterns" value="baseline and differential"/>
</dbReference>
<dbReference type="GO" id="GO:0005576">
    <property type="term" value="C:extracellular region"/>
    <property type="evidence" value="ECO:0007669"/>
    <property type="project" value="UniProtKB-SubCell"/>
</dbReference>
<dbReference type="GO" id="GO:0008810">
    <property type="term" value="F:cellulase activity"/>
    <property type="evidence" value="ECO:0007669"/>
    <property type="project" value="UniProtKB-EC"/>
</dbReference>
<dbReference type="GO" id="GO:0071555">
    <property type="term" value="P:cell wall organization"/>
    <property type="evidence" value="ECO:0007669"/>
    <property type="project" value="UniProtKB-KW"/>
</dbReference>
<dbReference type="GO" id="GO:0030245">
    <property type="term" value="P:cellulose catabolic process"/>
    <property type="evidence" value="ECO:0007669"/>
    <property type="project" value="UniProtKB-KW"/>
</dbReference>
<dbReference type="FunFam" id="1.50.10.10:FF:000020">
    <property type="entry name" value="Endoglucanase"/>
    <property type="match status" value="1"/>
</dbReference>
<dbReference type="Gene3D" id="1.50.10.10">
    <property type="match status" value="1"/>
</dbReference>
<dbReference type="InterPro" id="IPR008928">
    <property type="entry name" value="6-hairpin_glycosidase_sf"/>
</dbReference>
<dbReference type="InterPro" id="IPR012341">
    <property type="entry name" value="6hp_glycosidase-like_sf"/>
</dbReference>
<dbReference type="InterPro" id="IPR001701">
    <property type="entry name" value="Glyco_hydro_9"/>
</dbReference>
<dbReference type="InterPro" id="IPR018221">
    <property type="entry name" value="Glyco_hydro_9_His_AS"/>
</dbReference>
<dbReference type="PANTHER" id="PTHR22298">
    <property type="entry name" value="ENDO-1,4-BETA-GLUCANASE"/>
    <property type="match status" value="1"/>
</dbReference>
<dbReference type="Pfam" id="PF00759">
    <property type="entry name" value="Glyco_hydro_9"/>
    <property type="match status" value="1"/>
</dbReference>
<dbReference type="SUPFAM" id="SSF48208">
    <property type="entry name" value="Six-hairpin glycosidases"/>
    <property type="match status" value="1"/>
</dbReference>
<dbReference type="PROSITE" id="PS60032">
    <property type="entry name" value="GH9_1"/>
    <property type="match status" value="1"/>
</dbReference>
<dbReference type="PROSITE" id="PS00592">
    <property type="entry name" value="GH9_2"/>
    <property type="match status" value="1"/>
</dbReference>
<accession>O80497</accession>
<protein>
    <recommendedName>
        <fullName>Endoglucanase 15</fullName>
        <ecNumber>3.2.1.4</ecNumber>
    </recommendedName>
    <alternativeName>
        <fullName>Endo-1,4-beta glucanase 15</fullName>
    </alternativeName>
</protein>